<protein>
    <recommendedName>
        <fullName evidence="1">ATP-dependent dethiobiotin synthetase BioD</fullName>
        <ecNumber evidence="1">6.3.3.3</ecNumber>
    </recommendedName>
    <alternativeName>
        <fullName evidence="1">DTB synthetase</fullName>
        <shortName evidence="1">DTBS</shortName>
    </alternativeName>
    <alternativeName>
        <fullName evidence="1">Dethiobiotin synthase</fullName>
    </alternativeName>
</protein>
<dbReference type="EC" id="6.3.3.3" evidence="1"/>
<dbReference type="EMBL" id="CP000250">
    <property type="protein sequence ID" value="ABD09030.1"/>
    <property type="molecule type" value="Genomic_DNA"/>
</dbReference>
<dbReference type="RefSeq" id="WP_011443214.1">
    <property type="nucleotide sequence ID" value="NC_007778.1"/>
</dbReference>
<dbReference type="SMR" id="Q2IRY0"/>
<dbReference type="STRING" id="316058.RPB_4343"/>
<dbReference type="KEGG" id="rpb:RPB_4343"/>
<dbReference type="eggNOG" id="COG0132">
    <property type="taxonomic scope" value="Bacteria"/>
</dbReference>
<dbReference type="HOGENOM" id="CLU_072551_2_0_5"/>
<dbReference type="OrthoDB" id="9802097at2"/>
<dbReference type="UniPathway" id="UPA00078">
    <property type="reaction ID" value="UER00161"/>
</dbReference>
<dbReference type="Proteomes" id="UP000008809">
    <property type="component" value="Chromosome"/>
</dbReference>
<dbReference type="GO" id="GO:0005829">
    <property type="term" value="C:cytosol"/>
    <property type="evidence" value="ECO:0007669"/>
    <property type="project" value="TreeGrafter"/>
</dbReference>
<dbReference type="GO" id="GO:0005524">
    <property type="term" value="F:ATP binding"/>
    <property type="evidence" value="ECO:0007669"/>
    <property type="project" value="UniProtKB-UniRule"/>
</dbReference>
<dbReference type="GO" id="GO:0004141">
    <property type="term" value="F:dethiobiotin synthase activity"/>
    <property type="evidence" value="ECO:0007669"/>
    <property type="project" value="UniProtKB-UniRule"/>
</dbReference>
<dbReference type="GO" id="GO:0000287">
    <property type="term" value="F:magnesium ion binding"/>
    <property type="evidence" value="ECO:0007669"/>
    <property type="project" value="UniProtKB-UniRule"/>
</dbReference>
<dbReference type="GO" id="GO:0009102">
    <property type="term" value="P:biotin biosynthetic process"/>
    <property type="evidence" value="ECO:0007669"/>
    <property type="project" value="UniProtKB-UniRule"/>
</dbReference>
<dbReference type="CDD" id="cd03109">
    <property type="entry name" value="DTBS"/>
    <property type="match status" value="1"/>
</dbReference>
<dbReference type="Gene3D" id="3.40.50.300">
    <property type="entry name" value="P-loop containing nucleotide triphosphate hydrolases"/>
    <property type="match status" value="1"/>
</dbReference>
<dbReference type="HAMAP" id="MF_00336">
    <property type="entry name" value="BioD"/>
    <property type="match status" value="1"/>
</dbReference>
<dbReference type="InterPro" id="IPR004472">
    <property type="entry name" value="DTB_synth_BioD"/>
</dbReference>
<dbReference type="InterPro" id="IPR027417">
    <property type="entry name" value="P-loop_NTPase"/>
</dbReference>
<dbReference type="NCBIfam" id="TIGR00347">
    <property type="entry name" value="bioD"/>
    <property type="match status" value="1"/>
</dbReference>
<dbReference type="PANTHER" id="PTHR43210:SF2">
    <property type="entry name" value="ATP-DEPENDENT DETHIOBIOTIN SYNTHETASE BIOD 2"/>
    <property type="match status" value="1"/>
</dbReference>
<dbReference type="PANTHER" id="PTHR43210">
    <property type="entry name" value="DETHIOBIOTIN SYNTHETASE"/>
    <property type="match status" value="1"/>
</dbReference>
<dbReference type="Pfam" id="PF13500">
    <property type="entry name" value="AAA_26"/>
    <property type="match status" value="1"/>
</dbReference>
<dbReference type="PIRSF" id="PIRSF006755">
    <property type="entry name" value="DTB_synth"/>
    <property type="match status" value="1"/>
</dbReference>
<dbReference type="SUPFAM" id="SSF52540">
    <property type="entry name" value="P-loop containing nucleoside triphosphate hydrolases"/>
    <property type="match status" value="1"/>
</dbReference>
<organism>
    <name type="scientific">Rhodopseudomonas palustris (strain HaA2)</name>
    <dbReference type="NCBI Taxonomy" id="316058"/>
    <lineage>
        <taxon>Bacteria</taxon>
        <taxon>Pseudomonadati</taxon>
        <taxon>Pseudomonadota</taxon>
        <taxon>Alphaproteobacteria</taxon>
        <taxon>Hyphomicrobiales</taxon>
        <taxon>Nitrobacteraceae</taxon>
        <taxon>Rhodopseudomonas</taxon>
    </lineage>
</organism>
<feature type="chain" id="PRO_0000302547" description="ATP-dependent dethiobiotin synthetase BioD">
    <location>
        <begin position="1"/>
        <end position="213"/>
    </location>
</feature>
<feature type="active site" evidence="1">
    <location>
        <position position="33"/>
    </location>
</feature>
<feature type="binding site" evidence="1">
    <location>
        <begin position="13"/>
        <end position="18"/>
    </location>
    <ligand>
        <name>ATP</name>
        <dbReference type="ChEBI" id="CHEBI:30616"/>
    </ligand>
</feature>
<feature type="binding site" evidence="1">
    <location>
        <position position="17"/>
    </location>
    <ligand>
        <name>Mg(2+)</name>
        <dbReference type="ChEBI" id="CHEBI:18420"/>
    </ligand>
</feature>
<feature type="binding site" evidence="1">
    <location>
        <begin position="100"/>
        <end position="103"/>
    </location>
    <ligand>
        <name>ATP</name>
        <dbReference type="ChEBI" id="CHEBI:30616"/>
    </ligand>
</feature>
<feature type="binding site" evidence="1">
    <location>
        <position position="100"/>
    </location>
    <ligand>
        <name>Mg(2+)</name>
        <dbReference type="ChEBI" id="CHEBI:18420"/>
    </ligand>
</feature>
<feature type="binding site" evidence="1">
    <location>
        <begin position="184"/>
        <end position="186"/>
    </location>
    <ligand>
        <name>ATP</name>
        <dbReference type="ChEBI" id="CHEBI:30616"/>
    </ligand>
</feature>
<comment type="function">
    <text evidence="1">Catalyzes a mechanistically unusual reaction, the ATP-dependent insertion of CO2 between the N7 and N8 nitrogen atoms of 7,8-diaminopelargonic acid (DAPA, also called 7,8-diammoniononanoate) to form a ureido ring.</text>
</comment>
<comment type="catalytic activity">
    <reaction evidence="1">
        <text>(7R,8S)-7,8-diammoniononanoate + CO2 + ATP = (4R,5S)-dethiobiotin + ADP + phosphate + 3 H(+)</text>
        <dbReference type="Rhea" id="RHEA:15805"/>
        <dbReference type="ChEBI" id="CHEBI:15378"/>
        <dbReference type="ChEBI" id="CHEBI:16526"/>
        <dbReference type="ChEBI" id="CHEBI:30616"/>
        <dbReference type="ChEBI" id="CHEBI:43474"/>
        <dbReference type="ChEBI" id="CHEBI:149469"/>
        <dbReference type="ChEBI" id="CHEBI:149473"/>
        <dbReference type="ChEBI" id="CHEBI:456216"/>
        <dbReference type="EC" id="6.3.3.3"/>
    </reaction>
</comment>
<comment type="cofactor">
    <cofactor evidence="1">
        <name>Mg(2+)</name>
        <dbReference type="ChEBI" id="CHEBI:18420"/>
    </cofactor>
</comment>
<comment type="pathway">
    <text evidence="1">Cofactor biosynthesis; biotin biosynthesis; biotin from 7,8-diaminononanoate: step 1/2.</text>
</comment>
<comment type="subunit">
    <text evidence="1">Homodimer.</text>
</comment>
<comment type="subcellular location">
    <subcellularLocation>
        <location evidence="1">Cytoplasm</location>
    </subcellularLocation>
</comment>
<comment type="similarity">
    <text evidence="1">Belongs to the dethiobiotin synthetase family.</text>
</comment>
<evidence type="ECO:0000255" key="1">
    <source>
        <dbReference type="HAMAP-Rule" id="MF_00336"/>
    </source>
</evidence>
<keyword id="KW-0067">ATP-binding</keyword>
<keyword id="KW-0093">Biotin biosynthesis</keyword>
<keyword id="KW-0963">Cytoplasm</keyword>
<keyword id="KW-0436">Ligase</keyword>
<keyword id="KW-0460">Magnesium</keyword>
<keyword id="KW-0479">Metal-binding</keyword>
<keyword id="KW-0547">Nucleotide-binding</keyword>
<keyword id="KW-1185">Reference proteome</keyword>
<accession>Q2IRY0</accession>
<reference key="1">
    <citation type="submission" date="2006-01" db="EMBL/GenBank/DDBJ databases">
        <title>Complete sequence of Rhodopseudomonas palustris HaA2.</title>
        <authorList>
            <consortium name="US DOE Joint Genome Institute"/>
            <person name="Copeland A."/>
            <person name="Lucas S."/>
            <person name="Lapidus A."/>
            <person name="Barry K."/>
            <person name="Detter J.C."/>
            <person name="Glavina T."/>
            <person name="Hammon N."/>
            <person name="Israni S."/>
            <person name="Pitluck S."/>
            <person name="Chain P."/>
            <person name="Malfatti S."/>
            <person name="Shin M."/>
            <person name="Vergez L."/>
            <person name="Schmutz J."/>
            <person name="Larimer F."/>
            <person name="Land M."/>
            <person name="Hauser L."/>
            <person name="Pelletier D.A."/>
            <person name="Kyrpides N."/>
            <person name="Anderson I."/>
            <person name="Oda Y."/>
            <person name="Harwood C.S."/>
            <person name="Richardson P."/>
        </authorList>
    </citation>
    <scope>NUCLEOTIDE SEQUENCE [LARGE SCALE GENOMIC DNA]</scope>
    <source>
        <strain>HaA2</strain>
    </source>
</reference>
<name>BIOD_RHOP2</name>
<sequence length="213" mass="22740">MTKPIVVTGTDTGIGKTVFAAALAGALDAFYWKPVQAGIEDETDRQAVLRLSGLPDARLLPEAYRLNTPASPHLAAEIDGVTIDAEALALPEIDGPLVVEGAGGLLVPLTRAITYIDIFARWRAPVVLCARTTLGTINHTLLSIEALRARAIPLLGVAFIGDENVESERVIVQIGRVPRLGRLPRLVEVTADALRAAFAQNFNTDDFLKDPAS</sequence>
<gene>
    <name evidence="1" type="primary">bioD</name>
    <name type="ordered locus">RPB_4343</name>
</gene>
<proteinExistence type="inferred from homology"/>